<gene>
    <name type="primary">ZBTB22</name>
    <name type="synonym">BING1</name>
    <name type="synonym">ZBTB22A</name>
    <name type="synonym">ZNF297</name>
</gene>
<feature type="chain" id="PRO_0000047517" description="Zinc finger and BTB domain-containing protein 22">
    <location>
        <begin position="1"/>
        <end position="634"/>
    </location>
</feature>
<feature type="domain" description="BTB" evidence="1">
    <location>
        <begin position="57"/>
        <end position="121"/>
    </location>
</feature>
<feature type="zinc finger region" description="C2H2-type 1; atypical" evidence="2">
    <location>
        <begin position="486"/>
        <end position="507"/>
    </location>
</feature>
<feature type="zinc finger region" description="C2H2-type 2" evidence="2">
    <location>
        <begin position="513"/>
        <end position="535"/>
    </location>
</feature>
<feature type="zinc finger region" description="C2H2-type 3" evidence="2">
    <location>
        <begin position="541"/>
        <end position="562"/>
    </location>
</feature>
<feature type="region of interest" description="Disordered" evidence="3">
    <location>
        <begin position="167"/>
        <end position="247"/>
    </location>
</feature>
<feature type="region of interest" description="Disordered" evidence="3">
    <location>
        <begin position="308"/>
        <end position="461"/>
    </location>
</feature>
<feature type="region of interest" description="Disordered" evidence="3">
    <location>
        <begin position="568"/>
        <end position="634"/>
    </location>
</feature>
<feature type="compositionally biased region" description="Low complexity" evidence="3">
    <location>
        <begin position="180"/>
        <end position="198"/>
    </location>
</feature>
<feature type="compositionally biased region" description="Polar residues" evidence="3">
    <location>
        <begin position="199"/>
        <end position="209"/>
    </location>
</feature>
<feature type="compositionally biased region" description="Low complexity" evidence="3">
    <location>
        <begin position="217"/>
        <end position="229"/>
    </location>
</feature>
<feature type="compositionally biased region" description="Acidic residues" evidence="3">
    <location>
        <begin position="317"/>
        <end position="340"/>
    </location>
</feature>
<feature type="compositionally biased region" description="Low complexity" evidence="3">
    <location>
        <begin position="452"/>
        <end position="461"/>
    </location>
</feature>
<feature type="compositionally biased region" description="Low complexity" evidence="3">
    <location>
        <begin position="608"/>
        <end position="618"/>
    </location>
</feature>
<feature type="modified residue" description="Phosphoserine" evidence="8">
    <location>
        <position position="202"/>
    </location>
</feature>
<feature type="sequence variant" id="VAR_057457" description="In dbSNP:rs35663442.">
    <original>G</original>
    <variation>A</variation>
    <location>
        <position position="250"/>
    </location>
</feature>
<feature type="sequence variant" id="VAR_022702" description="In dbSNP:rs3130100." evidence="4 5 6">
    <original>T</original>
    <variation>A</variation>
    <location>
        <position position="310"/>
    </location>
</feature>
<sequence>MEPSPLSPSGAALPLPLSLAPPPLPLPAAAVVHVSFPEVTSALLESLNQQRLQGQLCDVSIRVQGREFRAHRAVLAASSPYFHDQVLLKGMTSISLPSVMDPGAFETVLASAYTGRLSMAAADIVNFLTVGSVLQMWHIVDKCTELLREGRASATTTITTAAATSVTVPGAGVPSGSGGTVAPATMGSARSHASSRASENQSPSSSNYFSPRESTDFSSSSQEAFAASAVGSGERRGGGPVFPAPVVGSGGATSGKLLLEADELCDDGGDGRGAVVPGAGLRRPTYTPPSIMPQKHWVYVKRGGNCPAPTPLVPQDPDLEEEEEEEDLVLTCEDDEDEELGGSSRVPVGGGPEATLSISDVRTLSEPPDKGEEQVNFCESSNDFGPYEGGGPVAGLDDSGGPTPSSYAPSHPPRPLLPLDMQGNQILVFPSSSSSSSSQAPGQPPGNQAEHGAVTVGGTSVGSLGVPGSVGGVPGGTGSGDGNKIFLCHCGKAFSHKSMRDRHVNMHLNLRPFDCPVCNKKFKMKHHLTEHMKTHTGLKPYECGVCAKKFMWRDSFMRHRGHCERRHRLGGVGAVPGPGTPTGPSLPSKRESPGVGGGSGDEASAATPPSSRRVWSPPRVHKVEMGFGGGGGAN</sequence>
<name>ZBT22_HUMAN</name>
<accession>O15209</accession>
<accession>B0V007</accession>
<accession>Q5HYV4</accession>
<accession>Q5STL0</accession>
<accession>Q5STR7</accession>
<accession>Q8WV82</accession>
<protein>
    <recommendedName>
        <fullName>Zinc finger and BTB domain-containing protein 22</fullName>
    </recommendedName>
    <alternativeName>
        <fullName>Protein BING1</fullName>
    </alternativeName>
    <alternativeName>
        <fullName>Zinc finger and BTB domain-containing protein 22A</fullName>
    </alternativeName>
    <alternativeName>
        <fullName>Zinc finger protein 297</fullName>
    </alternativeName>
</protein>
<comment type="function">
    <text>May be involved in transcriptional regulation.</text>
</comment>
<comment type="interaction">
    <interactant intactId="EBI-723574">
        <id>O15209</id>
    </interactant>
    <interactant intactId="EBI-10961312">
        <id>Q8IYE1</id>
        <label>CCDC13</label>
    </interactant>
    <organismsDiffer>false</organismsDiffer>
    <experiments>3</experiments>
</comment>
<comment type="interaction">
    <interactant intactId="EBI-723574">
        <id>O15209</id>
    </interactant>
    <interactant intactId="EBI-740459">
        <id>P51116</id>
        <label>FXR2</label>
    </interactant>
    <organismsDiffer>false</organismsDiffer>
    <experiments>3</experiments>
</comment>
<comment type="interaction">
    <interactant intactId="EBI-723574">
        <id>O15209</id>
    </interactant>
    <interactant intactId="EBI-746969">
        <id>Q9H0R8</id>
        <label>GABARAPL1</label>
    </interactant>
    <organismsDiffer>false</organismsDiffer>
    <experiments>4</experiments>
</comment>
<comment type="interaction">
    <interactant intactId="EBI-723574">
        <id>O15209</id>
    </interactant>
    <interactant intactId="EBI-1052570">
        <id>O95995</id>
        <label>GAS8</label>
    </interactant>
    <organismsDiffer>false</organismsDiffer>
    <experiments>3</experiments>
</comment>
<comment type="interaction">
    <interactant intactId="EBI-723574">
        <id>O15209</id>
    </interactant>
    <interactant intactId="EBI-348259">
        <id>Q96EZ8</id>
        <label>MCRS1</label>
    </interactant>
    <organismsDiffer>false</organismsDiffer>
    <experiments>6</experiments>
</comment>
<comment type="interaction">
    <interactant intactId="EBI-723574">
        <id>O15209</id>
    </interactant>
    <interactant intactId="EBI-1104564">
        <id>Q9Y316</id>
        <label>MEMO1</label>
    </interactant>
    <organismsDiffer>false</organismsDiffer>
    <experiments>3</experiments>
</comment>
<comment type="interaction">
    <interactant intactId="EBI-723574">
        <id>O15209</id>
    </interactant>
    <interactant intactId="EBI-5773143">
        <id>Q6P2C6</id>
        <label>MLLT6</label>
    </interactant>
    <organismsDiffer>false</organismsDiffer>
    <experiments>3</experiments>
</comment>
<comment type="interaction">
    <interactant intactId="EBI-723574">
        <id>O15209</id>
    </interactant>
    <interactant intactId="EBI-714158">
        <id>Q13526</id>
        <label>PIN1</label>
    </interactant>
    <organismsDiffer>false</organismsDiffer>
    <experiments>3</experiments>
</comment>
<comment type="interaction">
    <interactant intactId="EBI-723574">
        <id>O15209</id>
    </interactant>
    <interactant intactId="EBI-6654703">
        <id>Q14498-3</id>
        <label>RBM39</label>
    </interactant>
    <organismsDiffer>false</organismsDiffer>
    <experiments>3</experiments>
</comment>
<comment type="interaction">
    <interactant intactId="EBI-723574">
        <id>O15209</id>
    </interactant>
    <interactant intactId="EBI-710310">
        <id>Q15560</id>
        <label>TCEA2</label>
    </interactant>
    <organismsDiffer>false</organismsDiffer>
    <experiments>3</experiments>
</comment>
<comment type="interaction">
    <interactant intactId="EBI-723574">
        <id>O15209</id>
    </interactant>
    <interactant intactId="EBI-1059156">
        <id>Q9P0L0</id>
        <label>VAPA</label>
    </interactant>
    <organismsDiffer>false</organismsDiffer>
    <experiments>3</experiments>
</comment>
<comment type="interaction">
    <interactant intactId="EBI-723574">
        <id>O15209</id>
    </interactant>
    <interactant intactId="EBI-1188298">
        <id>O95292</id>
        <label>VAPB</label>
    </interactant>
    <organismsDiffer>false</organismsDiffer>
    <experiments>3</experiments>
</comment>
<comment type="interaction">
    <interactant intactId="EBI-723574">
        <id>O15209</id>
    </interactant>
    <interactant intactId="EBI-10174961">
        <id>A8KA83</id>
    </interactant>
    <organismsDiffer>false</organismsDiffer>
    <experiments>3</experiments>
</comment>
<comment type="subcellular location">
    <subcellularLocation>
        <location evidence="7">Nucleus</location>
    </subcellularLocation>
</comment>
<comment type="similarity">
    <text evidence="7">Belongs to the krueppel C2H2-type zinc-finger protein family.</text>
</comment>
<keyword id="KW-0238">DNA-binding</keyword>
<keyword id="KW-0479">Metal-binding</keyword>
<keyword id="KW-0539">Nucleus</keyword>
<keyword id="KW-0597">Phosphoprotein</keyword>
<keyword id="KW-1267">Proteomics identification</keyword>
<keyword id="KW-1185">Reference proteome</keyword>
<keyword id="KW-0677">Repeat</keyword>
<keyword id="KW-0804">Transcription</keyword>
<keyword id="KW-0805">Transcription regulation</keyword>
<keyword id="KW-0862">Zinc</keyword>
<keyword id="KW-0863">Zinc-finger</keyword>
<organism>
    <name type="scientific">Homo sapiens</name>
    <name type="common">Human</name>
    <dbReference type="NCBI Taxonomy" id="9606"/>
    <lineage>
        <taxon>Eukaryota</taxon>
        <taxon>Metazoa</taxon>
        <taxon>Chordata</taxon>
        <taxon>Craniata</taxon>
        <taxon>Vertebrata</taxon>
        <taxon>Euteleostomi</taxon>
        <taxon>Mammalia</taxon>
        <taxon>Eutheria</taxon>
        <taxon>Euarchontoglires</taxon>
        <taxon>Primates</taxon>
        <taxon>Haplorrhini</taxon>
        <taxon>Catarrhini</taxon>
        <taxon>Hominidae</taxon>
        <taxon>Homo</taxon>
    </lineage>
</organism>
<proteinExistence type="evidence at protein level"/>
<reference key="1">
    <citation type="journal article" date="1998" name="J. Mol. Biol.">
        <title>TAPASIN, DAXX, RGL2, HKE2 and four new genes (BING 1, 3 to 5) form a dense cluster at the centromeric end of the MHC.</title>
        <authorList>
            <person name="Herberg J.A."/>
            <person name="Beck S."/>
            <person name="Trowsdale J."/>
        </authorList>
    </citation>
    <scope>NUCLEOTIDE SEQUENCE [GENOMIC DNA]</scope>
</reference>
<reference key="2">
    <citation type="journal article" date="2004" name="Nat. Genet.">
        <title>Complete sequencing and characterization of 21,243 full-length human cDNAs.</title>
        <authorList>
            <person name="Ota T."/>
            <person name="Suzuki Y."/>
            <person name="Nishikawa T."/>
            <person name="Otsuki T."/>
            <person name="Sugiyama T."/>
            <person name="Irie R."/>
            <person name="Wakamatsu A."/>
            <person name="Hayashi K."/>
            <person name="Sato H."/>
            <person name="Nagai K."/>
            <person name="Kimura K."/>
            <person name="Makita H."/>
            <person name="Sekine M."/>
            <person name="Obayashi M."/>
            <person name="Nishi T."/>
            <person name="Shibahara T."/>
            <person name="Tanaka T."/>
            <person name="Ishii S."/>
            <person name="Yamamoto J."/>
            <person name="Saito K."/>
            <person name="Kawai Y."/>
            <person name="Isono Y."/>
            <person name="Nakamura Y."/>
            <person name="Nagahari K."/>
            <person name="Murakami K."/>
            <person name="Yasuda T."/>
            <person name="Iwayanagi T."/>
            <person name="Wagatsuma M."/>
            <person name="Shiratori A."/>
            <person name="Sudo H."/>
            <person name="Hosoiri T."/>
            <person name="Kaku Y."/>
            <person name="Kodaira H."/>
            <person name="Kondo H."/>
            <person name="Sugawara M."/>
            <person name="Takahashi M."/>
            <person name="Kanda K."/>
            <person name="Yokoi T."/>
            <person name="Furuya T."/>
            <person name="Kikkawa E."/>
            <person name="Omura Y."/>
            <person name="Abe K."/>
            <person name="Kamihara K."/>
            <person name="Katsuta N."/>
            <person name="Sato K."/>
            <person name="Tanikawa M."/>
            <person name="Yamazaki M."/>
            <person name="Ninomiya K."/>
            <person name="Ishibashi T."/>
            <person name="Yamashita H."/>
            <person name="Murakawa K."/>
            <person name="Fujimori K."/>
            <person name="Tanai H."/>
            <person name="Kimata M."/>
            <person name="Watanabe M."/>
            <person name="Hiraoka S."/>
            <person name="Chiba Y."/>
            <person name="Ishida S."/>
            <person name="Ono Y."/>
            <person name="Takiguchi S."/>
            <person name="Watanabe S."/>
            <person name="Yosida M."/>
            <person name="Hotuta T."/>
            <person name="Kusano J."/>
            <person name="Kanehori K."/>
            <person name="Takahashi-Fujii A."/>
            <person name="Hara H."/>
            <person name="Tanase T.-O."/>
            <person name="Nomura Y."/>
            <person name="Togiya S."/>
            <person name="Komai F."/>
            <person name="Hara R."/>
            <person name="Takeuchi K."/>
            <person name="Arita M."/>
            <person name="Imose N."/>
            <person name="Musashino K."/>
            <person name="Yuuki H."/>
            <person name="Oshima A."/>
            <person name="Sasaki N."/>
            <person name="Aotsuka S."/>
            <person name="Yoshikawa Y."/>
            <person name="Matsunawa H."/>
            <person name="Ichihara T."/>
            <person name="Shiohata N."/>
            <person name="Sano S."/>
            <person name="Moriya S."/>
            <person name="Momiyama H."/>
            <person name="Satoh N."/>
            <person name="Takami S."/>
            <person name="Terashima Y."/>
            <person name="Suzuki O."/>
            <person name="Nakagawa S."/>
            <person name="Senoh A."/>
            <person name="Mizoguchi H."/>
            <person name="Goto Y."/>
            <person name="Shimizu F."/>
            <person name="Wakebe H."/>
            <person name="Hishigaki H."/>
            <person name="Watanabe T."/>
            <person name="Sugiyama A."/>
            <person name="Takemoto M."/>
            <person name="Kawakami B."/>
            <person name="Yamazaki M."/>
            <person name="Watanabe K."/>
            <person name="Kumagai A."/>
            <person name="Itakura S."/>
            <person name="Fukuzumi Y."/>
            <person name="Fujimori Y."/>
            <person name="Komiyama M."/>
            <person name="Tashiro H."/>
            <person name="Tanigami A."/>
            <person name="Fujiwara T."/>
            <person name="Ono T."/>
            <person name="Yamada K."/>
            <person name="Fujii Y."/>
            <person name="Ozaki K."/>
            <person name="Hirao M."/>
            <person name="Ohmori Y."/>
            <person name="Kawabata A."/>
            <person name="Hikiji T."/>
            <person name="Kobatake N."/>
            <person name="Inagaki H."/>
            <person name="Ikema Y."/>
            <person name="Okamoto S."/>
            <person name="Okitani R."/>
            <person name="Kawakami T."/>
            <person name="Noguchi S."/>
            <person name="Itoh T."/>
            <person name="Shigeta K."/>
            <person name="Senba T."/>
            <person name="Matsumura K."/>
            <person name="Nakajima Y."/>
            <person name="Mizuno T."/>
            <person name="Morinaga M."/>
            <person name="Sasaki M."/>
            <person name="Togashi T."/>
            <person name="Oyama M."/>
            <person name="Hata H."/>
            <person name="Watanabe M."/>
            <person name="Komatsu T."/>
            <person name="Mizushima-Sugano J."/>
            <person name="Satoh T."/>
            <person name="Shirai Y."/>
            <person name="Takahashi Y."/>
            <person name="Nakagawa K."/>
            <person name="Okumura K."/>
            <person name="Nagase T."/>
            <person name="Nomura N."/>
            <person name="Kikuchi H."/>
            <person name="Masuho Y."/>
            <person name="Yamashita R."/>
            <person name="Nakai K."/>
            <person name="Yada T."/>
            <person name="Nakamura Y."/>
            <person name="Ohara O."/>
            <person name="Isogai T."/>
            <person name="Sugano S."/>
        </authorList>
    </citation>
    <scope>NUCLEOTIDE SEQUENCE [LARGE SCALE MRNA]</scope>
    <scope>VARIANT ALA-310</scope>
    <source>
        <tissue>Brain</tissue>
    </source>
</reference>
<reference key="3">
    <citation type="journal article" date="2003" name="Nature">
        <title>The DNA sequence and analysis of human chromosome 6.</title>
        <authorList>
            <person name="Mungall A.J."/>
            <person name="Palmer S.A."/>
            <person name="Sims S.K."/>
            <person name="Edwards C.A."/>
            <person name="Ashurst J.L."/>
            <person name="Wilming L."/>
            <person name="Jones M.C."/>
            <person name="Horton R."/>
            <person name="Hunt S.E."/>
            <person name="Scott C.E."/>
            <person name="Gilbert J.G.R."/>
            <person name="Clamp M.E."/>
            <person name="Bethel G."/>
            <person name="Milne S."/>
            <person name="Ainscough R."/>
            <person name="Almeida J.P."/>
            <person name="Ambrose K.D."/>
            <person name="Andrews T.D."/>
            <person name="Ashwell R.I.S."/>
            <person name="Babbage A.K."/>
            <person name="Bagguley C.L."/>
            <person name="Bailey J."/>
            <person name="Banerjee R."/>
            <person name="Barker D.J."/>
            <person name="Barlow K.F."/>
            <person name="Bates K."/>
            <person name="Beare D.M."/>
            <person name="Beasley H."/>
            <person name="Beasley O."/>
            <person name="Bird C.P."/>
            <person name="Blakey S.E."/>
            <person name="Bray-Allen S."/>
            <person name="Brook J."/>
            <person name="Brown A.J."/>
            <person name="Brown J.Y."/>
            <person name="Burford D.C."/>
            <person name="Burrill W."/>
            <person name="Burton J."/>
            <person name="Carder C."/>
            <person name="Carter N.P."/>
            <person name="Chapman J.C."/>
            <person name="Clark S.Y."/>
            <person name="Clark G."/>
            <person name="Clee C.M."/>
            <person name="Clegg S."/>
            <person name="Cobley V."/>
            <person name="Collier R.E."/>
            <person name="Collins J.E."/>
            <person name="Colman L.K."/>
            <person name="Corby N.R."/>
            <person name="Coville G.J."/>
            <person name="Culley K.M."/>
            <person name="Dhami P."/>
            <person name="Davies J."/>
            <person name="Dunn M."/>
            <person name="Earthrowl M.E."/>
            <person name="Ellington A.E."/>
            <person name="Evans K.A."/>
            <person name="Faulkner L."/>
            <person name="Francis M.D."/>
            <person name="Frankish A."/>
            <person name="Frankland J."/>
            <person name="French L."/>
            <person name="Garner P."/>
            <person name="Garnett J."/>
            <person name="Ghori M.J."/>
            <person name="Gilby L.M."/>
            <person name="Gillson C.J."/>
            <person name="Glithero R.J."/>
            <person name="Grafham D.V."/>
            <person name="Grant M."/>
            <person name="Gribble S."/>
            <person name="Griffiths C."/>
            <person name="Griffiths M.N.D."/>
            <person name="Hall R."/>
            <person name="Halls K.S."/>
            <person name="Hammond S."/>
            <person name="Harley J.L."/>
            <person name="Hart E.A."/>
            <person name="Heath P.D."/>
            <person name="Heathcott R."/>
            <person name="Holmes S.J."/>
            <person name="Howden P.J."/>
            <person name="Howe K.L."/>
            <person name="Howell G.R."/>
            <person name="Huckle E."/>
            <person name="Humphray S.J."/>
            <person name="Humphries M.D."/>
            <person name="Hunt A.R."/>
            <person name="Johnson C.M."/>
            <person name="Joy A.A."/>
            <person name="Kay M."/>
            <person name="Keenan S.J."/>
            <person name="Kimberley A.M."/>
            <person name="King A."/>
            <person name="Laird G.K."/>
            <person name="Langford C."/>
            <person name="Lawlor S."/>
            <person name="Leongamornlert D.A."/>
            <person name="Leversha M."/>
            <person name="Lloyd C.R."/>
            <person name="Lloyd D.M."/>
            <person name="Loveland J.E."/>
            <person name="Lovell J."/>
            <person name="Martin S."/>
            <person name="Mashreghi-Mohammadi M."/>
            <person name="Maslen G.L."/>
            <person name="Matthews L."/>
            <person name="McCann O.T."/>
            <person name="McLaren S.J."/>
            <person name="McLay K."/>
            <person name="McMurray A."/>
            <person name="Moore M.J.F."/>
            <person name="Mullikin J.C."/>
            <person name="Niblett D."/>
            <person name="Nickerson T."/>
            <person name="Novik K.L."/>
            <person name="Oliver K."/>
            <person name="Overton-Larty E.K."/>
            <person name="Parker A."/>
            <person name="Patel R."/>
            <person name="Pearce A.V."/>
            <person name="Peck A.I."/>
            <person name="Phillimore B.J.C.T."/>
            <person name="Phillips S."/>
            <person name="Plumb R.W."/>
            <person name="Porter K.M."/>
            <person name="Ramsey Y."/>
            <person name="Ranby S.A."/>
            <person name="Rice C.M."/>
            <person name="Ross M.T."/>
            <person name="Searle S.M."/>
            <person name="Sehra H.K."/>
            <person name="Sheridan E."/>
            <person name="Skuce C.D."/>
            <person name="Smith S."/>
            <person name="Smith M."/>
            <person name="Spraggon L."/>
            <person name="Squares S.L."/>
            <person name="Steward C.A."/>
            <person name="Sycamore N."/>
            <person name="Tamlyn-Hall G."/>
            <person name="Tester J."/>
            <person name="Theaker A.J."/>
            <person name="Thomas D.W."/>
            <person name="Thorpe A."/>
            <person name="Tracey A."/>
            <person name="Tromans A."/>
            <person name="Tubby B."/>
            <person name="Wall M."/>
            <person name="Wallis J.M."/>
            <person name="West A.P."/>
            <person name="White S.S."/>
            <person name="Whitehead S.L."/>
            <person name="Whittaker H."/>
            <person name="Wild A."/>
            <person name="Willey D.J."/>
            <person name="Wilmer T.E."/>
            <person name="Wood J.M."/>
            <person name="Wray P.W."/>
            <person name="Wyatt J.C."/>
            <person name="Young L."/>
            <person name="Younger R.M."/>
            <person name="Bentley D.R."/>
            <person name="Coulson A."/>
            <person name="Durbin R.M."/>
            <person name="Hubbard T."/>
            <person name="Sulston J.E."/>
            <person name="Dunham I."/>
            <person name="Rogers J."/>
            <person name="Beck S."/>
        </authorList>
    </citation>
    <scope>NUCLEOTIDE SEQUENCE [LARGE SCALE GENOMIC DNA]</scope>
    <scope>VARIANT ALA-310</scope>
</reference>
<reference key="4">
    <citation type="submission" date="2005-07" db="EMBL/GenBank/DDBJ databases">
        <authorList>
            <person name="Mural R.J."/>
            <person name="Istrail S."/>
            <person name="Sutton G.G."/>
            <person name="Florea L."/>
            <person name="Halpern A.L."/>
            <person name="Mobarry C.M."/>
            <person name="Lippert R."/>
            <person name="Walenz B."/>
            <person name="Shatkay H."/>
            <person name="Dew I."/>
            <person name="Miller J.R."/>
            <person name="Flanigan M.J."/>
            <person name="Edwards N.J."/>
            <person name="Bolanos R."/>
            <person name="Fasulo D."/>
            <person name="Halldorsson B.V."/>
            <person name="Hannenhalli S."/>
            <person name="Turner R."/>
            <person name="Yooseph S."/>
            <person name="Lu F."/>
            <person name="Nusskern D.R."/>
            <person name="Shue B.C."/>
            <person name="Zheng X.H."/>
            <person name="Zhong F."/>
            <person name="Delcher A.L."/>
            <person name="Huson D.H."/>
            <person name="Kravitz S.A."/>
            <person name="Mouchard L."/>
            <person name="Reinert K."/>
            <person name="Remington K.A."/>
            <person name="Clark A.G."/>
            <person name="Waterman M.S."/>
            <person name="Eichler E.E."/>
            <person name="Adams M.D."/>
            <person name="Hunkapiller M.W."/>
            <person name="Myers E.W."/>
            <person name="Venter J.C."/>
        </authorList>
    </citation>
    <scope>NUCLEOTIDE SEQUENCE [LARGE SCALE GENOMIC DNA]</scope>
</reference>
<reference key="5">
    <citation type="journal article" date="2004" name="Genome Res.">
        <title>The status, quality, and expansion of the NIH full-length cDNA project: the Mammalian Gene Collection (MGC).</title>
        <authorList>
            <consortium name="The MGC Project Team"/>
        </authorList>
    </citation>
    <scope>NUCLEOTIDE SEQUENCE [LARGE SCALE MRNA]</scope>
    <scope>VARIANT ALA-310</scope>
    <source>
        <tissue>Lymph</tissue>
    </source>
</reference>
<reference key="6">
    <citation type="journal article" date="2013" name="J. Proteome Res.">
        <title>Toward a comprehensive characterization of a human cancer cell phosphoproteome.</title>
        <authorList>
            <person name="Zhou H."/>
            <person name="Di Palma S."/>
            <person name="Preisinger C."/>
            <person name="Peng M."/>
            <person name="Polat A.N."/>
            <person name="Heck A.J."/>
            <person name="Mohammed S."/>
        </authorList>
    </citation>
    <scope>PHOSPHORYLATION [LARGE SCALE ANALYSIS] AT SER-202</scope>
    <scope>IDENTIFICATION BY MASS SPECTROMETRY [LARGE SCALE ANALYSIS]</scope>
    <source>
        <tissue>Erythroleukemia</tissue>
    </source>
</reference>
<dbReference type="EMBL" id="Z97183">
    <property type="status" value="NOT_ANNOTATED_CDS"/>
    <property type="molecule type" value="Genomic_DNA"/>
</dbReference>
<dbReference type="EMBL" id="Z97184">
    <property type="protein sequence ID" value="CAB09990.1"/>
    <property type="molecule type" value="Genomic_DNA"/>
</dbReference>
<dbReference type="EMBL" id="AK315747">
    <property type="protein sequence ID" value="BAG38101.1"/>
    <property type="molecule type" value="mRNA"/>
</dbReference>
<dbReference type="EMBL" id="AL662820">
    <property type="status" value="NOT_ANNOTATED_CDS"/>
    <property type="molecule type" value="Genomic_DNA"/>
</dbReference>
<dbReference type="EMBL" id="AL662827">
    <property type="status" value="NOT_ANNOTATED_CDS"/>
    <property type="molecule type" value="Genomic_DNA"/>
</dbReference>
<dbReference type="EMBL" id="BX248088">
    <property type="status" value="NOT_ANNOTATED_CDS"/>
    <property type="molecule type" value="Genomic_DNA"/>
</dbReference>
<dbReference type="EMBL" id="CR759786">
    <property type="status" value="NOT_ANNOTATED_CDS"/>
    <property type="molecule type" value="Genomic_DNA"/>
</dbReference>
<dbReference type="EMBL" id="CR759817">
    <property type="status" value="NOT_ANNOTATED_CDS"/>
    <property type="molecule type" value="Genomic_DNA"/>
</dbReference>
<dbReference type="EMBL" id="CH471081">
    <property type="protein sequence ID" value="EAX03721.1"/>
    <property type="molecule type" value="Genomic_DNA"/>
</dbReference>
<dbReference type="EMBL" id="BC018541">
    <property type="protein sequence ID" value="AAH18541.1"/>
    <property type="molecule type" value="mRNA"/>
</dbReference>
<dbReference type="CCDS" id="CCDS4775.1"/>
<dbReference type="RefSeq" id="NP_001138810.1">
    <property type="nucleotide sequence ID" value="NM_001145338.2"/>
</dbReference>
<dbReference type="RefSeq" id="NP_005444.4">
    <property type="nucleotide sequence ID" value="NM_005453.4"/>
</dbReference>
<dbReference type="SMR" id="O15209"/>
<dbReference type="BioGRID" id="114695">
    <property type="interactions" value="21"/>
</dbReference>
<dbReference type="DIP" id="DIP-62047N"/>
<dbReference type="FunCoup" id="O15209">
    <property type="interactions" value="287"/>
</dbReference>
<dbReference type="IntAct" id="O15209">
    <property type="interactions" value="19"/>
</dbReference>
<dbReference type="STRING" id="9606.ENSP00000407545"/>
<dbReference type="GlyGen" id="O15209">
    <property type="glycosylation" value="4 sites"/>
</dbReference>
<dbReference type="iPTMnet" id="O15209"/>
<dbReference type="PhosphoSitePlus" id="O15209"/>
<dbReference type="BioMuta" id="ZBTB22"/>
<dbReference type="jPOST" id="O15209"/>
<dbReference type="MassIVE" id="O15209"/>
<dbReference type="PaxDb" id="9606-ENSP00000407545"/>
<dbReference type="PeptideAtlas" id="O15209"/>
<dbReference type="ProteomicsDB" id="48510"/>
<dbReference type="Antibodypedia" id="29118">
    <property type="antibodies" value="110 antibodies from 21 providers"/>
</dbReference>
<dbReference type="DNASU" id="9278"/>
<dbReference type="Ensembl" id="ENST00000383196.4">
    <property type="protein sequence ID" value="ENSP00000372683.4"/>
    <property type="gene ID" value="ENSG00000206280.7"/>
</dbReference>
<dbReference type="Ensembl" id="ENST00000416097.2">
    <property type="protein sequence ID" value="ENSP00000393514.2"/>
    <property type="gene ID" value="ENSG00000229253.5"/>
</dbReference>
<dbReference type="Ensembl" id="ENST00000418540.2">
    <property type="protein sequence ID" value="ENSP00000388191.2"/>
    <property type="gene ID" value="ENSG00000227780.5"/>
</dbReference>
<dbReference type="Ensembl" id="ENST00000418724.1">
    <property type="protein sequence ID" value="ENSP00000404403.1"/>
    <property type="gene ID" value="ENSG00000236104.3"/>
</dbReference>
<dbReference type="Ensembl" id="ENST00000431845.3">
    <property type="protein sequence ID" value="ENSP00000407545.2"/>
    <property type="gene ID" value="ENSG00000236104.3"/>
</dbReference>
<dbReference type="Ensembl" id="ENST00000445320.2">
    <property type="protein sequence ID" value="ENSP00000396292.2"/>
    <property type="gene ID" value="ENSG00000237056.5"/>
</dbReference>
<dbReference type="GeneID" id="9278"/>
<dbReference type="KEGG" id="hsa:9278"/>
<dbReference type="MANE-Select" id="ENST00000431845.3">
    <property type="protein sequence ID" value="ENSP00000407545.2"/>
    <property type="RefSeq nucleotide sequence ID" value="NM_005453.5"/>
    <property type="RefSeq protein sequence ID" value="NP_005444.4"/>
</dbReference>
<dbReference type="UCSC" id="uc003oeb.4">
    <property type="organism name" value="human"/>
</dbReference>
<dbReference type="AGR" id="HGNC:13085"/>
<dbReference type="CTD" id="9278"/>
<dbReference type="DisGeNET" id="9278"/>
<dbReference type="GeneCards" id="ZBTB22"/>
<dbReference type="HGNC" id="HGNC:13085">
    <property type="gene designation" value="ZBTB22"/>
</dbReference>
<dbReference type="HPA" id="ENSG00000236104">
    <property type="expression patterns" value="Low tissue specificity"/>
</dbReference>
<dbReference type="MIM" id="611439">
    <property type="type" value="gene"/>
</dbReference>
<dbReference type="neXtProt" id="NX_O15209"/>
<dbReference type="OpenTargets" id="ENSG00000236104"/>
<dbReference type="PharmGKB" id="PA37661"/>
<dbReference type="VEuPathDB" id="HostDB:ENSG00000236104"/>
<dbReference type="eggNOG" id="KOG1721">
    <property type="taxonomic scope" value="Eukaryota"/>
</dbReference>
<dbReference type="GeneTree" id="ENSGT00940000160991"/>
<dbReference type="HOGENOM" id="CLU_029118_2_0_1"/>
<dbReference type="InParanoid" id="O15209"/>
<dbReference type="OMA" id="KPYDCLS"/>
<dbReference type="OrthoDB" id="10004641at2759"/>
<dbReference type="PAN-GO" id="O15209">
    <property type="GO annotations" value="3 GO annotations based on evolutionary models"/>
</dbReference>
<dbReference type="PhylomeDB" id="O15209"/>
<dbReference type="PathwayCommons" id="O15209"/>
<dbReference type="SignaLink" id="O15209"/>
<dbReference type="BioGRID-ORCS" id="9278">
    <property type="hits" value="8 hits in 1186 CRISPR screens"/>
</dbReference>
<dbReference type="ChiTaRS" id="ZBTB22">
    <property type="organism name" value="human"/>
</dbReference>
<dbReference type="GenomeRNAi" id="9278"/>
<dbReference type="Pharos" id="O15209">
    <property type="development level" value="Tbio"/>
</dbReference>
<dbReference type="PRO" id="PR:O15209"/>
<dbReference type="Proteomes" id="UP000005640">
    <property type="component" value="Chromosome 6"/>
</dbReference>
<dbReference type="RNAct" id="O15209">
    <property type="molecule type" value="protein"/>
</dbReference>
<dbReference type="Bgee" id="ENSG00000236104">
    <property type="expression patterns" value="Expressed in apex of heart and 96 other cell types or tissues"/>
</dbReference>
<dbReference type="ExpressionAtlas" id="O15209">
    <property type="expression patterns" value="baseline and differential"/>
</dbReference>
<dbReference type="GO" id="GO:0000785">
    <property type="term" value="C:chromatin"/>
    <property type="evidence" value="ECO:0000247"/>
    <property type="project" value="NTNU_SB"/>
</dbReference>
<dbReference type="GO" id="GO:0005634">
    <property type="term" value="C:nucleus"/>
    <property type="evidence" value="ECO:0000304"/>
    <property type="project" value="ProtInc"/>
</dbReference>
<dbReference type="GO" id="GO:0003677">
    <property type="term" value="F:DNA binding"/>
    <property type="evidence" value="ECO:0000304"/>
    <property type="project" value="ProtInc"/>
</dbReference>
<dbReference type="GO" id="GO:0000981">
    <property type="term" value="F:DNA-binding transcription factor activity, RNA polymerase II-specific"/>
    <property type="evidence" value="ECO:0000247"/>
    <property type="project" value="NTNU_SB"/>
</dbReference>
<dbReference type="GO" id="GO:0000978">
    <property type="term" value="F:RNA polymerase II cis-regulatory region sequence-specific DNA binding"/>
    <property type="evidence" value="ECO:0000318"/>
    <property type="project" value="GO_Central"/>
</dbReference>
<dbReference type="GO" id="GO:1990837">
    <property type="term" value="F:sequence-specific double-stranded DNA binding"/>
    <property type="evidence" value="ECO:0000314"/>
    <property type="project" value="ARUK-UCL"/>
</dbReference>
<dbReference type="GO" id="GO:0008270">
    <property type="term" value="F:zinc ion binding"/>
    <property type="evidence" value="ECO:0007669"/>
    <property type="project" value="UniProtKB-KW"/>
</dbReference>
<dbReference type="GO" id="GO:0006357">
    <property type="term" value="P:regulation of transcription by RNA polymerase II"/>
    <property type="evidence" value="ECO:0000318"/>
    <property type="project" value="GO_Central"/>
</dbReference>
<dbReference type="CDD" id="cd18210">
    <property type="entry name" value="BTB_POZ_ZBTB22_BING1"/>
    <property type="match status" value="1"/>
</dbReference>
<dbReference type="FunFam" id="3.30.710.10:FF:000107">
    <property type="entry name" value="Zinc finger and BTB domain containing 22"/>
    <property type="match status" value="1"/>
</dbReference>
<dbReference type="FunFam" id="3.30.160.60:FF:000145">
    <property type="entry name" value="Zinc finger protein 574"/>
    <property type="match status" value="1"/>
</dbReference>
<dbReference type="Gene3D" id="3.30.160.60">
    <property type="entry name" value="Classic Zinc Finger"/>
    <property type="match status" value="1"/>
</dbReference>
<dbReference type="Gene3D" id="3.30.710.10">
    <property type="entry name" value="Potassium Channel Kv1.1, Chain A"/>
    <property type="match status" value="1"/>
</dbReference>
<dbReference type="InterPro" id="IPR000210">
    <property type="entry name" value="BTB/POZ_dom"/>
</dbReference>
<dbReference type="InterPro" id="IPR011333">
    <property type="entry name" value="SKP1/BTB/POZ_sf"/>
</dbReference>
<dbReference type="InterPro" id="IPR036236">
    <property type="entry name" value="Znf_C2H2_sf"/>
</dbReference>
<dbReference type="InterPro" id="IPR013087">
    <property type="entry name" value="Znf_C2H2_type"/>
</dbReference>
<dbReference type="InterPro" id="IPR050457">
    <property type="entry name" value="ZnFinger_BTB_dom_contain"/>
</dbReference>
<dbReference type="PANTHER" id="PTHR46105">
    <property type="entry name" value="AGAP004733-PA"/>
    <property type="match status" value="1"/>
</dbReference>
<dbReference type="PANTHER" id="PTHR46105:SF14">
    <property type="entry name" value="ZINC FINGER AND BTB DOMAIN-CONTAINING PROTEIN 22"/>
    <property type="match status" value="1"/>
</dbReference>
<dbReference type="Pfam" id="PF00651">
    <property type="entry name" value="BTB"/>
    <property type="match status" value="1"/>
</dbReference>
<dbReference type="Pfam" id="PF00096">
    <property type="entry name" value="zf-C2H2"/>
    <property type="match status" value="1"/>
</dbReference>
<dbReference type="SMART" id="SM00225">
    <property type="entry name" value="BTB"/>
    <property type="match status" value="1"/>
</dbReference>
<dbReference type="SMART" id="SM00355">
    <property type="entry name" value="ZnF_C2H2"/>
    <property type="match status" value="3"/>
</dbReference>
<dbReference type="SUPFAM" id="SSF57667">
    <property type="entry name" value="beta-beta-alpha zinc fingers"/>
    <property type="match status" value="1"/>
</dbReference>
<dbReference type="SUPFAM" id="SSF54695">
    <property type="entry name" value="POZ domain"/>
    <property type="match status" value="1"/>
</dbReference>
<dbReference type="PROSITE" id="PS50097">
    <property type="entry name" value="BTB"/>
    <property type="match status" value="1"/>
</dbReference>
<dbReference type="PROSITE" id="PS00028">
    <property type="entry name" value="ZINC_FINGER_C2H2_1"/>
    <property type="match status" value="1"/>
</dbReference>
<dbReference type="PROSITE" id="PS50157">
    <property type="entry name" value="ZINC_FINGER_C2H2_2"/>
    <property type="match status" value="2"/>
</dbReference>
<evidence type="ECO:0000255" key="1">
    <source>
        <dbReference type="PROSITE-ProRule" id="PRU00037"/>
    </source>
</evidence>
<evidence type="ECO:0000255" key="2">
    <source>
        <dbReference type="PROSITE-ProRule" id="PRU00042"/>
    </source>
</evidence>
<evidence type="ECO:0000256" key="3">
    <source>
        <dbReference type="SAM" id="MobiDB-lite"/>
    </source>
</evidence>
<evidence type="ECO:0000269" key="4">
    <source>
    </source>
</evidence>
<evidence type="ECO:0000269" key="5">
    <source>
    </source>
</evidence>
<evidence type="ECO:0000269" key="6">
    <source>
    </source>
</evidence>
<evidence type="ECO:0000305" key="7"/>
<evidence type="ECO:0007744" key="8">
    <source>
    </source>
</evidence>